<keyword id="KW-0324">Glycolysis</keyword>
<keyword id="KW-0413">Isomerase</keyword>
<keyword id="KW-0464">Manganese</keyword>
<keyword id="KW-0479">Metal-binding</keyword>
<keyword id="KW-1185">Reference proteome</keyword>
<name>GPMI_CLONN</name>
<accession>A0PYP3</accession>
<sequence>MAKKPVMLAILDGLGLSDHKDGNAFSLAKKPNLDKIFKEYPHTVLGASGLSVGLPDGQMGNSEVGHLNIGAGRIVYQALTRITKSIEDGDIFKNEALLKAIDNAKNNDSAIHFMGLLSDGGVHSHIDHLKGLIDFAAKSGVKKVYVHAFLDGRDTAPKSALTYIEDLEKHMAEVGVGSIATVSGRYYAMDRDKRWERIELAYNAMVLGKGEVATSPKEAVERSYHDNKTDEFVLPTVIEKDGKPVATIKSNDSVVFFNFRPDRARQITRAINDKEFDGFKRETLNLVFVTMTEYDSTIEGVEVAFKPESYVNTLGEYVSKQGKKQLRIAETEKYAHVTFFFNGGVEEPNQNEDRALIPSPKVATYDLKPEMSAYEVTDEVLKRIDSDEYDMIILNYANPDMVGHTGVIDAAVKAVETVDECLGKVMDKILEKNGALFITADHGNCEQMIDYSTGNPMTAHTTNLVPFAYIANDAKEKELREEGILADIAPTMLQSMGLEVPKEMTGKSLFK</sequence>
<protein>
    <recommendedName>
        <fullName evidence="1">2,3-bisphosphoglycerate-independent phosphoglycerate mutase</fullName>
        <shortName evidence="1">BPG-independent PGAM</shortName>
        <shortName evidence="1">Phosphoglyceromutase</shortName>
        <shortName evidence="1">iPGM</shortName>
        <ecNumber evidence="1">5.4.2.12</ecNumber>
    </recommendedName>
</protein>
<feature type="chain" id="PRO_1000063956" description="2,3-bisphosphoglycerate-independent phosphoglycerate mutase">
    <location>
        <begin position="1"/>
        <end position="511"/>
    </location>
</feature>
<feature type="active site" description="Phosphoserine intermediate" evidence="1">
    <location>
        <position position="62"/>
    </location>
</feature>
<feature type="binding site" evidence="1">
    <location>
        <position position="12"/>
    </location>
    <ligand>
        <name>Mn(2+)</name>
        <dbReference type="ChEBI" id="CHEBI:29035"/>
        <label>2</label>
    </ligand>
</feature>
<feature type="binding site" evidence="1">
    <location>
        <position position="62"/>
    </location>
    <ligand>
        <name>Mn(2+)</name>
        <dbReference type="ChEBI" id="CHEBI:29035"/>
        <label>2</label>
    </ligand>
</feature>
<feature type="binding site" evidence="1">
    <location>
        <position position="123"/>
    </location>
    <ligand>
        <name>substrate</name>
    </ligand>
</feature>
<feature type="binding site" evidence="1">
    <location>
        <begin position="153"/>
        <end position="154"/>
    </location>
    <ligand>
        <name>substrate</name>
    </ligand>
</feature>
<feature type="binding site" evidence="1">
    <location>
        <position position="185"/>
    </location>
    <ligand>
        <name>substrate</name>
    </ligand>
</feature>
<feature type="binding site" evidence="1">
    <location>
        <position position="191"/>
    </location>
    <ligand>
        <name>substrate</name>
    </ligand>
</feature>
<feature type="binding site" evidence="1">
    <location>
        <begin position="260"/>
        <end position="263"/>
    </location>
    <ligand>
        <name>substrate</name>
    </ligand>
</feature>
<feature type="binding site" evidence="1">
    <location>
        <position position="333"/>
    </location>
    <ligand>
        <name>substrate</name>
    </ligand>
</feature>
<feature type="binding site" evidence="1">
    <location>
        <position position="400"/>
    </location>
    <ligand>
        <name>Mn(2+)</name>
        <dbReference type="ChEBI" id="CHEBI:29035"/>
        <label>1</label>
    </ligand>
</feature>
<feature type="binding site" evidence="1">
    <location>
        <position position="404"/>
    </location>
    <ligand>
        <name>Mn(2+)</name>
        <dbReference type="ChEBI" id="CHEBI:29035"/>
        <label>1</label>
    </ligand>
</feature>
<feature type="binding site" evidence="1">
    <location>
        <position position="441"/>
    </location>
    <ligand>
        <name>Mn(2+)</name>
        <dbReference type="ChEBI" id="CHEBI:29035"/>
        <label>2</label>
    </ligand>
</feature>
<feature type="binding site" evidence="1">
    <location>
        <position position="442"/>
    </location>
    <ligand>
        <name>Mn(2+)</name>
        <dbReference type="ChEBI" id="CHEBI:29035"/>
        <label>2</label>
    </ligand>
</feature>
<feature type="binding site" evidence="1">
    <location>
        <position position="460"/>
    </location>
    <ligand>
        <name>Mn(2+)</name>
        <dbReference type="ChEBI" id="CHEBI:29035"/>
        <label>1</label>
    </ligand>
</feature>
<organism>
    <name type="scientific">Clostridium novyi (strain NT)</name>
    <dbReference type="NCBI Taxonomy" id="386415"/>
    <lineage>
        <taxon>Bacteria</taxon>
        <taxon>Bacillati</taxon>
        <taxon>Bacillota</taxon>
        <taxon>Clostridia</taxon>
        <taxon>Eubacteriales</taxon>
        <taxon>Clostridiaceae</taxon>
        <taxon>Clostridium</taxon>
    </lineage>
</organism>
<evidence type="ECO:0000255" key="1">
    <source>
        <dbReference type="HAMAP-Rule" id="MF_01038"/>
    </source>
</evidence>
<dbReference type="EC" id="5.4.2.12" evidence="1"/>
<dbReference type="EMBL" id="CP000382">
    <property type="protein sequence ID" value="ABK61517.1"/>
    <property type="molecule type" value="Genomic_DNA"/>
</dbReference>
<dbReference type="RefSeq" id="WP_011721503.1">
    <property type="nucleotide sequence ID" value="NC_008593.1"/>
</dbReference>
<dbReference type="SMR" id="A0PYP3"/>
<dbReference type="STRING" id="386415.NT01CX_1413"/>
<dbReference type="KEGG" id="cno:NT01CX_1413"/>
<dbReference type="eggNOG" id="COG0696">
    <property type="taxonomic scope" value="Bacteria"/>
</dbReference>
<dbReference type="HOGENOM" id="CLU_026099_2_0_9"/>
<dbReference type="UniPathway" id="UPA00109">
    <property type="reaction ID" value="UER00186"/>
</dbReference>
<dbReference type="Proteomes" id="UP000008220">
    <property type="component" value="Chromosome"/>
</dbReference>
<dbReference type="GO" id="GO:0005829">
    <property type="term" value="C:cytosol"/>
    <property type="evidence" value="ECO:0007669"/>
    <property type="project" value="TreeGrafter"/>
</dbReference>
<dbReference type="GO" id="GO:0030145">
    <property type="term" value="F:manganese ion binding"/>
    <property type="evidence" value="ECO:0007669"/>
    <property type="project" value="UniProtKB-UniRule"/>
</dbReference>
<dbReference type="GO" id="GO:0004619">
    <property type="term" value="F:phosphoglycerate mutase activity"/>
    <property type="evidence" value="ECO:0007669"/>
    <property type="project" value="UniProtKB-EC"/>
</dbReference>
<dbReference type="GO" id="GO:0006007">
    <property type="term" value="P:glucose catabolic process"/>
    <property type="evidence" value="ECO:0007669"/>
    <property type="project" value="InterPro"/>
</dbReference>
<dbReference type="GO" id="GO:0006096">
    <property type="term" value="P:glycolytic process"/>
    <property type="evidence" value="ECO:0007669"/>
    <property type="project" value="UniProtKB-UniRule"/>
</dbReference>
<dbReference type="CDD" id="cd16010">
    <property type="entry name" value="iPGM"/>
    <property type="match status" value="1"/>
</dbReference>
<dbReference type="FunFam" id="3.40.1450.10:FF:000001">
    <property type="entry name" value="2,3-bisphosphoglycerate-independent phosphoglycerate mutase"/>
    <property type="match status" value="1"/>
</dbReference>
<dbReference type="FunFam" id="3.40.720.10:FF:000001">
    <property type="entry name" value="2,3-bisphosphoglycerate-independent phosphoglycerate mutase"/>
    <property type="match status" value="1"/>
</dbReference>
<dbReference type="Gene3D" id="3.40.720.10">
    <property type="entry name" value="Alkaline Phosphatase, subunit A"/>
    <property type="match status" value="1"/>
</dbReference>
<dbReference type="Gene3D" id="3.40.1450.10">
    <property type="entry name" value="BPG-independent phosphoglycerate mutase, domain B"/>
    <property type="match status" value="1"/>
</dbReference>
<dbReference type="HAMAP" id="MF_01038">
    <property type="entry name" value="GpmI"/>
    <property type="match status" value="1"/>
</dbReference>
<dbReference type="InterPro" id="IPR017850">
    <property type="entry name" value="Alkaline_phosphatase_core_sf"/>
</dbReference>
<dbReference type="InterPro" id="IPR011258">
    <property type="entry name" value="BPG-indep_PGM_N"/>
</dbReference>
<dbReference type="InterPro" id="IPR006124">
    <property type="entry name" value="Metalloenzyme"/>
</dbReference>
<dbReference type="InterPro" id="IPR036646">
    <property type="entry name" value="PGAM_B_sf"/>
</dbReference>
<dbReference type="InterPro" id="IPR005995">
    <property type="entry name" value="Pgm_bpd_ind"/>
</dbReference>
<dbReference type="NCBIfam" id="TIGR01307">
    <property type="entry name" value="pgm_bpd_ind"/>
    <property type="match status" value="1"/>
</dbReference>
<dbReference type="PANTHER" id="PTHR31637">
    <property type="entry name" value="2,3-BISPHOSPHOGLYCERATE-INDEPENDENT PHOSPHOGLYCERATE MUTASE"/>
    <property type="match status" value="1"/>
</dbReference>
<dbReference type="PANTHER" id="PTHR31637:SF0">
    <property type="entry name" value="2,3-BISPHOSPHOGLYCERATE-INDEPENDENT PHOSPHOGLYCERATE MUTASE"/>
    <property type="match status" value="1"/>
</dbReference>
<dbReference type="Pfam" id="PF06415">
    <property type="entry name" value="iPGM_N"/>
    <property type="match status" value="1"/>
</dbReference>
<dbReference type="Pfam" id="PF01676">
    <property type="entry name" value="Metalloenzyme"/>
    <property type="match status" value="1"/>
</dbReference>
<dbReference type="PIRSF" id="PIRSF001492">
    <property type="entry name" value="IPGAM"/>
    <property type="match status" value="1"/>
</dbReference>
<dbReference type="SUPFAM" id="SSF64158">
    <property type="entry name" value="2,3-Bisphosphoglycerate-independent phosphoglycerate mutase, substrate-binding domain"/>
    <property type="match status" value="1"/>
</dbReference>
<dbReference type="SUPFAM" id="SSF53649">
    <property type="entry name" value="Alkaline phosphatase-like"/>
    <property type="match status" value="1"/>
</dbReference>
<comment type="function">
    <text evidence="1">Catalyzes the interconversion of 2-phosphoglycerate and 3-phosphoglycerate.</text>
</comment>
<comment type="catalytic activity">
    <reaction evidence="1">
        <text>(2R)-2-phosphoglycerate = (2R)-3-phosphoglycerate</text>
        <dbReference type="Rhea" id="RHEA:15901"/>
        <dbReference type="ChEBI" id="CHEBI:58272"/>
        <dbReference type="ChEBI" id="CHEBI:58289"/>
        <dbReference type="EC" id="5.4.2.12"/>
    </reaction>
</comment>
<comment type="cofactor">
    <cofactor evidence="1">
        <name>Mn(2+)</name>
        <dbReference type="ChEBI" id="CHEBI:29035"/>
    </cofactor>
    <text evidence="1">Binds 2 manganese ions per subunit.</text>
</comment>
<comment type="pathway">
    <text evidence="1">Carbohydrate degradation; glycolysis; pyruvate from D-glyceraldehyde 3-phosphate: step 3/5.</text>
</comment>
<comment type="subunit">
    <text evidence="1">Monomer.</text>
</comment>
<comment type="similarity">
    <text evidence="1">Belongs to the BPG-independent phosphoglycerate mutase family.</text>
</comment>
<gene>
    <name evidence="1" type="primary">gpmI</name>
    <name type="ordered locus">NT01CX_1413</name>
</gene>
<reference key="1">
    <citation type="journal article" date="2006" name="Nat. Biotechnol.">
        <title>The genome and transcriptomes of the anti-tumor agent Clostridium novyi-NT.</title>
        <authorList>
            <person name="Bettegowda C."/>
            <person name="Huang X."/>
            <person name="Lin J."/>
            <person name="Cheong I."/>
            <person name="Kohli M."/>
            <person name="Szabo S.A."/>
            <person name="Zhang X."/>
            <person name="Diaz L.A. Jr."/>
            <person name="Velculescu V.E."/>
            <person name="Parmigiani G."/>
            <person name="Kinzler K.W."/>
            <person name="Vogelstein B."/>
            <person name="Zhou S."/>
        </authorList>
    </citation>
    <scope>NUCLEOTIDE SEQUENCE [LARGE SCALE GENOMIC DNA]</scope>
    <source>
        <strain>NT</strain>
    </source>
</reference>
<proteinExistence type="inferred from homology"/>